<dbReference type="EMBL" id="AK021650">
    <property type="protein sequence ID" value="BAB13864.1"/>
    <property type="molecule type" value="mRNA"/>
</dbReference>
<dbReference type="EMBL" id="CH471059">
    <property type="protein sequence ID" value="EAX06851.1"/>
    <property type="molecule type" value="Genomic_DNA"/>
</dbReference>
<dbReference type="EMBL" id="BC007932">
    <property type="protein sequence ID" value="AAH07932.2"/>
    <property type="molecule type" value="mRNA"/>
</dbReference>
<dbReference type="EMBL" id="BC011804">
    <property type="protein sequence ID" value="AAH11804.1"/>
    <property type="status" value="ALT_INIT"/>
    <property type="molecule type" value="mRNA"/>
</dbReference>
<dbReference type="CCDS" id="CCDS552.2">
    <molecule id="Q7L4P6-1"/>
</dbReference>
<dbReference type="RefSeq" id="NP_001289011.1">
    <molecule id="Q7L4P6-2"/>
    <property type="nucleotide sequence ID" value="NM_001302082.2"/>
</dbReference>
<dbReference type="RefSeq" id="NP_001336722.1">
    <molecule id="Q7L4P6-2"/>
    <property type="nucleotide sequence ID" value="NM_001349793.2"/>
</dbReference>
<dbReference type="RefSeq" id="NP_001336723.1">
    <molecule id="Q7L4P6-2"/>
    <property type="nucleotide sequence ID" value="NM_001349794.2"/>
</dbReference>
<dbReference type="RefSeq" id="NP_078879.2">
    <molecule id="Q7L4P6-1"/>
    <property type="nucleotide sequence ID" value="NM_024603.4"/>
</dbReference>
<dbReference type="RefSeq" id="XP_011540444.1">
    <property type="nucleotide sequence ID" value="XM_011542142.2"/>
</dbReference>
<dbReference type="RefSeq" id="XP_016857823.1">
    <property type="nucleotide sequence ID" value="XM_017002334.1"/>
</dbReference>
<dbReference type="SMR" id="Q7L4P6"/>
<dbReference type="BioGRID" id="122782">
    <property type="interactions" value="30"/>
</dbReference>
<dbReference type="FunCoup" id="Q7L4P6">
    <property type="interactions" value="1"/>
</dbReference>
<dbReference type="IntAct" id="Q7L4P6">
    <property type="interactions" value="33"/>
</dbReference>
<dbReference type="MINT" id="Q7L4P6"/>
<dbReference type="STRING" id="9606.ENSP00000360899"/>
<dbReference type="GlyGen" id="Q7L4P6">
    <property type="glycosylation" value="1 site, 1 O-linked glycan (1 site)"/>
</dbReference>
<dbReference type="iPTMnet" id="Q7L4P6"/>
<dbReference type="PhosphoSitePlus" id="Q7L4P6"/>
<dbReference type="BioMuta" id="BEND5"/>
<dbReference type="DMDM" id="74738577"/>
<dbReference type="jPOST" id="Q7L4P6"/>
<dbReference type="MassIVE" id="Q7L4P6"/>
<dbReference type="PaxDb" id="9606-ENSP00000360899"/>
<dbReference type="PeptideAtlas" id="Q7L4P6"/>
<dbReference type="ProteomicsDB" id="68779">
    <molecule id="Q7L4P6-1"/>
</dbReference>
<dbReference type="ProteomicsDB" id="68780">
    <molecule id="Q7L4P6-2"/>
</dbReference>
<dbReference type="Antibodypedia" id="53655">
    <property type="antibodies" value="62 antibodies from 23 providers"/>
</dbReference>
<dbReference type="DNASU" id="79656"/>
<dbReference type="Ensembl" id="ENST00000371833.4">
    <molecule id="Q7L4P6-1"/>
    <property type="protein sequence ID" value="ENSP00000360899.3"/>
    <property type="gene ID" value="ENSG00000162373.13"/>
</dbReference>
<dbReference type="GeneID" id="79656"/>
<dbReference type="KEGG" id="hsa:79656"/>
<dbReference type="MANE-Select" id="ENST00000371833.4">
    <property type="protein sequence ID" value="ENSP00000360899.3"/>
    <property type="RefSeq nucleotide sequence ID" value="NM_024603.4"/>
    <property type="RefSeq protein sequence ID" value="NP_078879.2"/>
</dbReference>
<dbReference type="UCSC" id="uc001crx.5">
    <molecule id="Q7L4P6-1"/>
    <property type="organism name" value="human"/>
</dbReference>
<dbReference type="AGR" id="HGNC:25668"/>
<dbReference type="CTD" id="79656"/>
<dbReference type="DisGeNET" id="79656"/>
<dbReference type="GeneCards" id="BEND5"/>
<dbReference type="HGNC" id="HGNC:25668">
    <property type="gene designation" value="BEND5"/>
</dbReference>
<dbReference type="HPA" id="ENSG00000162373">
    <property type="expression patterns" value="Low tissue specificity"/>
</dbReference>
<dbReference type="neXtProt" id="NX_Q7L4P6"/>
<dbReference type="OpenTargets" id="ENSG00000162373"/>
<dbReference type="PharmGKB" id="PA164716542"/>
<dbReference type="VEuPathDB" id="HostDB:ENSG00000162373"/>
<dbReference type="eggNOG" id="ENOG502QTVS">
    <property type="taxonomic scope" value="Eukaryota"/>
</dbReference>
<dbReference type="GeneTree" id="ENSGT00390000001724"/>
<dbReference type="HOGENOM" id="CLU_739568_0_0_1"/>
<dbReference type="InParanoid" id="Q7L4P6"/>
<dbReference type="OMA" id="HQKVYLV"/>
<dbReference type="OrthoDB" id="9931198at2759"/>
<dbReference type="PAN-GO" id="Q7L4P6">
    <property type="GO annotations" value="1 GO annotation based on evolutionary models"/>
</dbReference>
<dbReference type="PhylomeDB" id="Q7L4P6"/>
<dbReference type="TreeFam" id="TF331898"/>
<dbReference type="PathwayCommons" id="Q7L4P6"/>
<dbReference type="SignaLink" id="Q7L4P6"/>
<dbReference type="BioGRID-ORCS" id="79656">
    <property type="hits" value="10 hits in 1143 CRISPR screens"/>
</dbReference>
<dbReference type="GenomeRNAi" id="79656"/>
<dbReference type="Pharos" id="Q7L4P6">
    <property type="development level" value="Tdark"/>
</dbReference>
<dbReference type="PRO" id="PR:Q7L4P6"/>
<dbReference type="Proteomes" id="UP000005640">
    <property type="component" value="Chromosome 1"/>
</dbReference>
<dbReference type="RNAct" id="Q7L4P6">
    <property type="molecule type" value="protein"/>
</dbReference>
<dbReference type="Bgee" id="ENSG00000162373">
    <property type="expression patterns" value="Expressed in ganglionic eminence and 132 other cell types or tissues"/>
</dbReference>
<dbReference type="ExpressionAtlas" id="Q7L4P6">
    <property type="expression patterns" value="baseline and differential"/>
</dbReference>
<dbReference type="GO" id="GO:0005794">
    <property type="term" value="C:Golgi apparatus"/>
    <property type="evidence" value="ECO:0007669"/>
    <property type="project" value="Ensembl"/>
</dbReference>
<dbReference type="GO" id="GO:0003677">
    <property type="term" value="F:DNA binding"/>
    <property type="evidence" value="ECO:0007669"/>
    <property type="project" value="UniProtKB-KW"/>
</dbReference>
<dbReference type="GO" id="GO:0045892">
    <property type="term" value="P:negative regulation of DNA-templated transcription"/>
    <property type="evidence" value="ECO:0000314"/>
    <property type="project" value="UniProtKB"/>
</dbReference>
<dbReference type="FunFam" id="1.10.10.2590:FF:000003">
    <property type="entry name" value="BEN domain-containing protein 5 isoform X1"/>
    <property type="match status" value="1"/>
</dbReference>
<dbReference type="Gene3D" id="1.10.10.2590">
    <property type="entry name" value="BEN domain"/>
    <property type="match status" value="1"/>
</dbReference>
<dbReference type="InterPro" id="IPR018379">
    <property type="entry name" value="BEN_domain"/>
</dbReference>
<dbReference type="InterPro" id="IPR040391">
    <property type="entry name" value="BEND5"/>
</dbReference>
<dbReference type="PANTHER" id="PTHR14628">
    <property type="entry name" value="BEN DOMAIN-CONTAINING PROTEIN 5"/>
    <property type="match status" value="1"/>
</dbReference>
<dbReference type="PANTHER" id="PTHR14628:SF1">
    <property type="entry name" value="BEN DOMAIN-CONTAINING PROTEIN 5"/>
    <property type="match status" value="1"/>
</dbReference>
<dbReference type="Pfam" id="PF10523">
    <property type="entry name" value="BEN"/>
    <property type="match status" value="1"/>
</dbReference>
<dbReference type="SMART" id="SM01025">
    <property type="entry name" value="BEN"/>
    <property type="match status" value="1"/>
</dbReference>
<dbReference type="PROSITE" id="PS51457">
    <property type="entry name" value="BEN"/>
    <property type="match status" value="1"/>
</dbReference>
<comment type="function">
    <text evidence="3">Acts as a transcriptional repressor (PubMed:23468431).</text>
</comment>
<comment type="interaction">
    <interactant intactId="EBI-724373">
        <id>Q7L4P6</id>
    </interactant>
    <interactant intactId="EBI-3904603">
        <id>P41223</id>
        <label>BUD31</label>
    </interactant>
    <organismsDiffer>false</organismsDiffer>
    <experiments>3</experiments>
</comment>
<comment type="interaction">
    <interactant intactId="EBI-724373">
        <id>Q7L4P6</id>
    </interactant>
    <interactant intactId="EBI-353818">
        <id>O15371</id>
        <label>EIF3D</label>
    </interactant>
    <organismsDiffer>false</organismsDiffer>
    <experiments>3</experiments>
</comment>
<comment type="interaction">
    <interactant intactId="EBI-724373">
        <id>Q7L4P6</id>
    </interactant>
    <interactant intactId="EBI-719941">
        <id>Q3B820</id>
        <label>FAM161A</label>
    </interactant>
    <organismsDiffer>false</organismsDiffer>
    <experiments>3</experiments>
</comment>
<comment type="interaction">
    <interactant intactId="EBI-724373">
        <id>Q7L4P6</id>
    </interactant>
    <interactant intactId="EBI-739467">
        <id>Q9H8Y8</id>
        <label>GORASP2</label>
    </interactant>
    <organismsDiffer>false</organismsDiffer>
    <experiments>4</experiments>
</comment>
<comment type="interaction">
    <interactant intactId="EBI-724373">
        <id>Q7L4P6</id>
    </interactant>
    <interactant intactId="EBI-10245913">
        <id>Q5T7P3</id>
        <label>LCE1B</label>
    </interactant>
    <organismsDiffer>false</organismsDiffer>
    <experiments>3</experiments>
</comment>
<comment type="interaction">
    <interactant intactId="EBI-724373">
        <id>Q7L4P6</id>
    </interactant>
    <interactant intactId="EBI-11742507">
        <id>Q8TAP4-4</id>
        <label>LMO3</label>
    </interactant>
    <organismsDiffer>false</organismsDiffer>
    <experiments>3</experiments>
</comment>
<comment type="interaction">
    <interactant intactId="EBI-724373">
        <id>Q7L4P6</id>
    </interactant>
    <interactant intactId="EBI-741158">
        <id>Q96HA8</id>
        <label>NTAQ1</label>
    </interactant>
    <organismsDiffer>false</organismsDiffer>
    <experiments>3</experiments>
</comment>
<comment type="interaction">
    <interactant intactId="EBI-724373">
        <id>Q7L4P6</id>
    </interactant>
    <interactant intactId="EBI-2568609">
        <id>Q9BSJ6</id>
        <label>PIMREG</label>
    </interactant>
    <organismsDiffer>false</organismsDiffer>
    <experiments>3</experiments>
</comment>
<comment type="interaction">
    <interactant intactId="EBI-724373">
        <id>Q7L4P6</id>
    </interactant>
    <interactant intactId="EBI-1053424">
        <id>O43741</id>
        <label>PRKAB2</label>
    </interactant>
    <organismsDiffer>false</organismsDiffer>
    <experiments>4</experiments>
</comment>
<comment type="interaction">
    <interactant intactId="EBI-724373">
        <id>Q7L4P6</id>
    </interactant>
    <interactant intactId="EBI-17614618">
        <id>Q8N8N7</id>
        <label>PTGR2</label>
    </interactant>
    <organismsDiffer>false</organismsDiffer>
    <experiments>3</experiments>
</comment>
<comment type="interaction">
    <interactant intactId="EBI-724373">
        <id>Q7L4P6</id>
    </interactant>
    <interactant intactId="EBI-10217913">
        <id>Q14D33</id>
        <label>RTP5</label>
    </interactant>
    <organismsDiffer>false</organismsDiffer>
    <experiments>3</experiments>
</comment>
<comment type="interaction">
    <interactant intactId="EBI-724373">
        <id>Q7L4P6</id>
    </interactant>
    <interactant intactId="EBI-358489">
        <id>Q96GM5</id>
        <label>SMARCD1</label>
    </interactant>
    <organismsDiffer>false</organismsDiffer>
    <experiments>3</experiments>
</comment>
<comment type="interaction">
    <interactant intactId="EBI-724373">
        <id>Q7L4P6</id>
    </interactant>
    <interactant intactId="EBI-10180829">
        <id>Q7KZS0</id>
        <label>UBE2I</label>
    </interactant>
    <organismsDiffer>false</organismsDiffer>
    <experiments>3</experiments>
</comment>
<comment type="interaction">
    <interactant intactId="EBI-724373">
        <id>Q7L4P6</id>
    </interactant>
    <interactant intactId="EBI-2511991">
        <id>Q9Y2K6</id>
        <label>USP20</label>
    </interactant>
    <organismsDiffer>false</organismsDiffer>
    <experiments>3</experiments>
</comment>
<comment type="interaction">
    <interactant intactId="EBI-724373">
        <id>Q7L4P6</id>
    </interactant>
    <interactant intactId="EBI-741945">
        <id>Q9BRG1</id>
        <label>VPS25</label>
    </interactant>
    <organismsDiffer>false</organismsDiffer>
    <experiments>3</experiments>
</comment>
<comment type="interaction">
    <interactant intactId="EBI-724373">
        <id>Q7L4P6</id>
    </interactant>
    <interactant intactId="EBI-16428984">
        <id>A0A0S2Z6H0</id>
        <label>ZGPAT</label>
    </interactant>
    <organismsDiffer>false</organismsDiffer>
    <experiments>3</experiments>
</comment>
<comment type="interaction">
    <interactant intactId="EBI-724373">
        <id>Q7L4P6</id>
    </interactant>
    <interactant intactId="EBI-3439227">
        <id>Q8N5A5</id>
        <label>ZGPAT</label>
    </interactant>
    <organismsDiffer>false</organismsDiffer>
    <experiments>3</experiments>
</comment>
<comment type="interaction">
    <interactant intactId="EBI-724373">
        <id>Q7L4P6</id>
    </interactant>
    <interactant intactId="EBI-740727">
        <id>Q8TAU3</id>
        <label>ZNF417</label>
    </interactant>
    <organismsDiffer>false</organismsDiffer>
    <experiments>3</experiments>
</comment>
<comment type="interaction">
    <interactant intactId="EBI-724373">
        <id>Q7L4P6</id>
    </interactant>
    <interactant intactId="EBI-16429014">
        <id>A0A0S2Z5X4</id>
        <label>ZNF688</label>
    </interactant>
    <organismsDiffer>false</organismsDiffer>
    <experiments>3</experiments>
</comment>
<comment type="alternative products">
    <event type="alternative splicing"/>
    <isoform>
        <id>Q7L4P6-1</id>
        <name>1</name>
        <sequence type="displayed"/>
    </isoform>
    <isoform>
        <id>Q7L4P6-2</id>
        <name>2</name>
        <sequence type="described" ref="VSP_022695"/>
    </isoform>
</comment>
<comment type="domain">
    <text evidence="3">The BEN domain mediates DNA-binding.</text>
</comment>
<comment type="sequence caution" evidence="5">
    <conflict type="erroneous initiation">
        <sequence resource="EMBL-CDS" id="AAH11804"/>
    </conflict>
</comment>
<gene>
    <name type="primary">BEND5</name>
    <name type="synonym">C1orf165</name>
</gene>
<evidence type="ECO:0000255" key="1"/>
<evidence type="ECO:0000255" key="2">
    <source>
        <dbReference type="PROSITE-ProRule" id="PRU00784"/>
    </source>
</evidence>
<evidence type="ECO:0000269" key="3">
    <source>
    </source>
</evidence>
<evidence type="ECO:0000303" key="4">
    <source>
    </source>
</evidence>
<evidence type="ECO:0000305" key="5"/>
<evidence type="ECO:0007744" key="6">
    <source>
    </source>
</evidence>
<evidence type="ECO:0007744" key="7">
    <source>
    </source>
</evidence>
<evidence type="ECO:0007744" key="8">
    <source>
    </source>
</evidence>
<proteinExistence type="evidence at protein level"/>
<keyword id="KW-0007">Acetylation</keyword>
<keyword id="KW-0025">Alternative splicing</keyword>
<keyword id="KW-0175">Coiled coil</keyword>
<keyword id="KW-0238">DNA-binding</keyword>
<keyword id="KW-1017">Isopeptide bond</keyword>
<keyword id="KW-1267">Proteomics identification</keyword>
<keyword id="KW-1185">Reference proteome</keyword>
<keyword id="KW-0678">Repressor</keyword>
<keyword id="KW-0804">Transcription</keyword>
<keyword id="KW-0805">Transcription regulation</keyword>
<keyword id="KW-0832">Ubl conjugation</keyword>
<feature type="chain" id="PRO_0000274279" description="BEN domain-containing protein 5">
    <location>
        <begin position="1"/>
        <end position="421"/>
    </location>
</feature>
<feature type="domain" description="BEN" evidence="2">
    <location>
        <begin position="302"/>
        <end position="408"/>
    </location>
</feature>
<feature type="coiled-coil region" evidence="1">
    <location>
        <begin position="180"/>
        <end position="243"/>
    </location>
</feature>
<feature type="modified residue" description="N6-acetyllysine" evidence="6">
    <location>
        <position position="133"/>
    </location>
</feature>
<feature type="cross-link" description="Glycyl lysine isopeptide (Lys-Gly) (interchain with G-Cter in SUMO2)" evidence="7 8">
    <location>
        <position position="258"/>
    </location>
</feature>
<feature type="splice variant" id="VSP_022695" description="In isoform 2." evidence="4">
    <location>
        <begin position="1"/>
        <end position="169"/>
    </location>
</feature>
<feature type="sequence conflict" description="In Ref. 1; BAB13864." evidence="5" ref="1">
    <original>H</original>
    <variation>R</variation>
    <location>
        <position position="363"/>
    </location>
</feature>
<accession>Q7L4P6</accession>
<accession>D3DQ27</accession>
<accession>Q96A62</accession>
<accession>Q9HAI3</accession>
<sequence>MYAFVRFLEDNVCYALPVSCVRDFSPRSRLDFDNQKVYAVYRGPEELGAGPESPPRAPRDWGALLLHKAQILALAEDKSDLENSVMQKKIKIPKLSLNHVEEDGEVKDYGEEDLQLRHIKRPEGRKPSEVAHKSIEAVVARLEKQNGLSLGHSTCPEEVFVEASPGTEDMDSLEDAVVPRALYEELLRNYQQQQEEMRHLQQELERTRRQLVQQAKKLKEYGALVSEMKELRDLNRRLQDVLLLRLGSGPAIDLEKVKSECLEPEPELRSTFSEEANTSSYYPAPAPVMDKYILDNGKVHLGSGIWVDEEKWHQLQVTQGDSKYTKNLAVMIWGTDVLKNRSVTGVATKKKKDAVPKPPLSPHKLSIVRECLYDRIAQETVDETEIAQRLSKVNKYICEKIMDINKSCKNEERREAKYNLQ</sequence>
<name>BEND5_HUMAN</name>
<reference key="1">
    <citation type="journal article" date="2004" name="Nat. Genet.">
        <title>Complete sequencing and characterization of 21,243 full-length human cDNAs.</title>
        <authorList>
            <person name="Ota T."/>
            <person name="Suzuki Y."/>
            <person name="Nishikawa T."/>
            <person name="Otsuki T."/>
            <person name="Sugiyama T."/>
            <person name="Irie R."/>
            <person name="Wakamatsu A."/>
            <person name="Hayashi K."/>
            <person name="Sato H."/>
            <person name="Nagai K."/>
            <person name="Kimura K."/>
            <person name="Makita H."/>
            <person name="Sekine M."/>
            <person name="Obayashi M."/>
            <person name="Nishi T."/>
            <person name="Shibahara T."/>
            <person name="Tanaka T."/>
            <person name="Ishii S."/>
            <person name="Yamamoto J."/>
            <person name="Saito K."/>
            <person name="Kawai Y."/>
            <person name="Isono Y."/>
            <person name="Nakamura Y."/>
            <person name="Nagahari K."/>
            <person name="Murakami K."/>
            <person name="Yasuda T."/>
            <person name="Iwayanagi T."/>
            <person name="Wagatsuma M."/>
            <person name="Shiratori A."/>
            <person name="Sudo H."/>
            <person name="Hosoiri T."/>
            <person name="Kaku Y."/>
            <person name="Kodaira H."/>
            <person name="Kondo H."/>
            <person name="Sugawara M."/>
            <person name="Takahashi M."/>
            <person name="Kanda K."/>
            <person name="Yokoi T."/>
            <person name="Furuya T."/>
            <person name="Kikkawa E."/>
            <person name="Omura Y."/>
            <person name="Abe K."/>
            <person name="Kamihara K."/>
            <person name="Katsuta N."/>
            <person name="Sato K."/>
            <person name="Tanikawa M."/>
            <person name="Yamazaki M."/>
            <person name="Ninomiya K."/>
            <person name="Ishibashi T."/>
            <person name="Yamashita H."/>
            <person name="Murakawa K."/>
            <person name="Fujimori K."/>
            <person name="Tanai H."/>
            <person name="Kimata M."/>
            <person name="Watanabe M."/>
            <person name="Hiraoka S."/>
            <person name="Chiba Y."/>
            <person name="Ishida S."/>
            <person name="Ono Y."/>
            <person name="Takiguchi S."/>
            <person name="Watanabe S."/>
            <person name="Yosida M."/>
            <person name="Hotuta T."/>
            <person name="Kusano J."/>
            <person name="Kanehori K."/>
            <person name="Takahashi-Fujii A."/>
            <person name="Hara H."/>
            <person name="Tanase T.-O."/>
            <person name="Nomura Y."/>
            <person name="Togiya S."/>
            <person name="Komai F."/>
            <person name="Hara R."/>
            <person name="Takeuchi K."/>
            <person name="Arita M."/>
            <person name="Imose N."/>
            <person name="Musashino K."/>
            <person name="Yuuki H."/>
            <person name="Oshima A."/>
            <person name="Sasaki N."/>
            <person name="Aotsuka S."/>
            <person name="Yoshikawa Y."/>
            <person name="Matsunawa H."/>
            <person name="Ichihara T."/>
            <person name="Shiohata N."/>
            <person name="Sano S."/>
            <person name="Moriya S."/>
            <person name="Momiyama H."/>
            <person name="Satoh N."/>
            <person name="Takami S."/>
            <person name="Terashima Y."/>
            <person name="Suzuki O."/>
            <person name="Nakagawa S."/>
            <person name="Senoh A."/>
            <person name="Mizoguchi H."/>
            <person name="Goto Y."/>
            <person name="Shimizu F."/>
            <person name="Wakebe H."/>
            <person name="Hishigaki H."/>
            <person name="Watanabe T."/>
            <person name="Sugiyama A."/>
            <person name="Takemoto M."/>
            <person name="Kawakami B."/>
            <person name="Yamazaki M."/>
            <person name="Watanabe K."/>
            <person name="Kumagai A."/>
            <person name="Itakura S."/>
            <person name="Fukuzumi Y."/>
            <person name="Fujimori Y."/>
            <person name="Komiyama M."/>
            <person name="Tashiro H."/>
            <person name="Tanigami A."/>
            <person name="Fujiwara T."/>
            <person name="Ono T."/>
            <person name="Yamada K."/>
            <person name="Fujii Y."/>
            <person name="Ozaki K."/>
            <person name="Hirao M."/>
            <person name="Ohmori Y."/>
            <person name="Kawabata A."/>
            <person name="Hikiji T."/>
            <person name="Kobatake N."/>
            <person name="Inagaki H."/>
            <person name="Ikema Y."/>
            <person name="Okamoto S."/>
            <person name="Okitani R."/>
            <person name="Kawakami T."/>
            <person name="Noguchi S."/>
            <person name="Itoh T."/>
            <person name="Shigeta K."/>
            <person name="Senba T."/>
            <person name="Matsumura K."/>
            <person name="Nakajima Y."/>
            <person name="Mizuno T."/>
            <person name="Morinaga M."/>
            <person name="Sasaki M."/>
            <person name="Togashi T."/>
            <person name="Oyama M."/>
            <person name="Hata H."/>
            <person name="Watanabe M."/>
            <person name="Komatsu T."/>
            <person name="Mizushima-Sugano J."/>
            <person name="Satoh T."/>
            <person name="Shirai Y."/>
            <person name="Takahashi Y."/>
            <person name="Nakagawa K."/>
            <person name="Okumura K."/>
            <person name="Nagase T."/>
            <person name="Nomura N."/>
            <person name="Kikuchi H."/>
            <person name="Masuho Y."/>
            <person name="Yamashita R."/>
            <person name="Nakai K."/>
            <person name="Yada T."/>
            <person name="Nakamura Y."/>
            <person name="Ohara O."/>
            <person name="Isogai T."/>
            <person name="Sugano S."/>
        </authorList>
    </citation>
    <scope>NUCLEOTIDE SEQUENCE [LARGE SCALE MRNA] (ISOFORM 2)</scope>
    <source>
        <tissue>Embryo</tissue>
    </source>
</reference>
<reference key="2">
    <citation type="submission" date="2005-09" db="EMBL/GenBank/DDBJ databases">
        <authorList>
            <person name="Mural R.J."/>
            <person name="Istrail S."/>
            <person name="Sutton G.G."/>
            <person name="Florea L."/>
            <person name="Halpern A.L."/>
            <person name="Mobarry C.M."/>
            <person name="Lippert R."/>
            <person name="Walenz B."/>
            <person name="Shatkay H."/>
            <person name="Dew I."/>
            <person name="Miller J.R."/>
            <person name="Flanigan M.J."/>
            <person name="Edwards N.J."/>
            <person name="Bolanos R."/>
            <person name="Fasulo D."/>
            <person name="Halldorsson B.V."/>
            <person name="Hannenhalli S."/>
            <person name="Turner R."/>
            <person name="Yooseph S."/>
            <person name="Lu F."/>
            <person name="Nusskern D.R."/>
            <person name="Shue B.C."/>
            <person name="Zheng X.H."/>
            <person name="Zhong F."/>
            <person name="Delcher A.L."/>
            <person name="Huson D.H."/>
            <person name="Kravitz S.A."/>
            <person name="Mouchard L."/>
            <person name="Reinert K."/>
            <person name="Remington K.A."/>
            <person name="Clark A.G."/>
            <person name="Waterman M.S."/>
            <person name="Eichler E.E."/>
            <person name="Adams M.D."/>
            <person name="Hunkapiller M.W."/>
            <person name="Myers E.W."/>
            <person name="Venter J.C."/>
        </authorList>
    </citation>
    <scope>NUCLEOTIDE SEQUENCE [LARGE SCALE GENOMIC DNA]</scope>
</reference>
<reference key="3">
    <citation type="journal article" date="2004" name="Genome Res.">
        <title>The status, quality, and expansion of the NIH full-length cDNA project: the Mammalian Gene Collection (MGC).</title>
        <authorList>
            <consortium name="The MGC Project Team"/>
        </authorList>
    </citation>
    <scope>NUCLEOTIDE SEQUENCE [LARGE SCALE MRNA] (ISOFORM 1)</scope>
    <source>
        <tissue>B-cell</tissue>
        <tissue>Muscle</tissue>
    </source>
</reference>
<reference key="4">
    <citation type="journal article" date="2009" name="Science">
        <title>Lysine acetylation targets protein complexes and co-regulates major cellular functions.</title>
        <authorList>
            <person name="Choudhary C."/>
            <person name="Kumar C."/>
            <person name="Gnad F."/>
            <person name="Nielsen M.L."/>
            <person name="Rehman M."/>
            <person name="Walther T.C."/>
            <person name="Olsen J.V."/>
            <person name="Mann M."/>
        </authorList>
    </citation>
    <scope>ACETYLATION [LARGE SCALE ANALYSIS] AT LYS-133</scope>
    <scope>IDENTIFICATION BY MASS SPECTROMETRY [LARGE SCALE ANALYSIS]</scope>
</reference>
<reference key="5">
    <citation type="journal article" date="2013" name="Genes Dev.">
        <title>The BEN domain is a novel sequence-specific DNA-binding domain conserved in neural transcriptional repressors.</title>
        <authorList>
            <person name="Dai Q."/>
            <person name="Ren A."/>
            <person name="Westholm J.O."/>
            <person name="Serganov A.A."/>
            <person name="Patel D.J."/>
            <person name="Lai E.C."/>
        </authorList>
    </citation>
    <scope>FUNCTION</scope>
    <scope>DOMAIN BEN</scope>
    <scope>DNA-BINDING</scope>
</reference>
<reference key="6">
    <citation type="journal article" date="2015" name="Mol. Cell. Proteomics">
        <title>System-wide analysis of SUMOylation dynamics in response to replication stress reveals novel small ubiquitin-like modified target proteins and acceptor lysines relevant for genome stability.</title>
        <authorList>
            <person name="Xiao Z."/>
            <person name="Chang J.G."/>
            <person name="Hendriks I.A."/>
            <person name="Sigurdsson J.O."/>
            <person name="Olsen J.V."/>
            <person name="Vertegaal A.C."/>
        </authorList>
    </citation>
    <scope>SUMOYLATION [LARGE SCALE ANALYSIS] AT LYS-258</scope>
    <scope>IDENTIFICATION BY MASS SPECTROMETRY [LARGE SCALE ANALYSIS]</scope>
</reference>
<reference key="7">
    <citation type="journal article" date="2017" name="Nat. Struct. Mol. Biol.">
        <title>Site-specific mapping of the human SUMO proteome reveals co-modification with phosphorylation.</title>
        <authorList>
            <person name="Hendriks I.A."/>
            <person name="Lyon D."/>
            <person name="Young C."/>
            <person name="Jensen L.J."/>
            <person name="Vertegaal A.C."/>
            <person name="Nielsen M.L."/>
        </authorList>
    </citation>
    <scope>SUMOYLATION [LARGE SCALE ANALYSIS] AT LYS-258</scope>
    <scope>IDENTIFICATION BY MASS SPECTROMETRY [LARGE SCALE ANALYSIS]</scope>
</reference>
<protein>
    <recommendedName>
        <fullName>BEN domain-containing protein 5</fullName>
    </recommendedName>
</protein>
<organism>
    <name type="scientific">Homo sapiens</name>
    <name type="common">Human</name>
    <dbReference type="NCBI Taxonomy" id="9606"/>
    <lineage>
        <taxon>Eukaryota</taxon>
        <taxon>Metazoa</taxon>
        <taxon>Chordata</taxon>
        <taxon>Craniata</taxon>
        <taxon>Vertebrata</taxon>
        <taxon>Euteleostomi</taxon>
        <taxon>Mammalia</taxon>
        <taxon>Eutheria</taxon>
        <taxon>Euarchontoglires</taxon>
        <taxon>Primates</taxon>
        <taxon>Haplorrhini</taxon>
        <taxon>Catarrhini</taxon>
        <taxon>Hominidae</taxon>
        <taxon>Homo</taxon>
    </lineage>
</organism>